<sequence>MIEIEKPKIETVELNEDAKYGKFVIEPLERGYGTTLGNSLRRILLSSLPGAAVTAIQIDGVLHEFSTVEGVVEDVTTIILNLKKLALKIYSDEEKTLEIDVQGEGIVTAADITHDSDVEILNPDLYIATLAKDAHFRVRLTAKRGRGYTPADANKSEDQPIGVIPIDSIYTPVSRVTYQVEKTRVGQVANYDKLTLDVWTDGSIGPKEAISLGAKILTEHLNIFVGLTDEAQNAEIMVEKEEDQKEKVLEMTIEELDLSVRSYNCLKRAGINTVQELANKTEEDMMKVRNLGRKSLEEVKHKLEELGLGLRKDD</sequence>
<accession>A7GK47</accession>
<organism>
    <name type="scientific">Bacillus cytotoxicus (strain DSM 22905 / CIP 110041 / 391-98 / NVH 391-98)</name>
    <dbReference type="NCBI Taxonomy" id="315749"/>
    <lineage>
        <taxon>Bacteria</taxon>
        <taxon>Bacillati</taxon>
        <taxon>Bacillota</taxon>
        <taxon>Bacilli</taxon>
        <taxon>Bacillales</taxon>
        <taxon>Bacillaceae</taxon>
        <taxon>Bacillus</taxon>
        <taxon>Bacillus cereus group</taxon>
    </lineage>
</organism>
<reference key="1">
    <citation type="journal article" date="2008" name="Chem. Biol. Interact.">
        <title>Extending the Bacillus cereus group genomics to putative food-borne pathogens of different toxicity.</title>
        <authorList>
            <person name="Lapidus A."/>
            <person name="Goltsman E."/>
            <person name="Auger S."/>
            <person name="Galleron N."/>
            <person name="Segurens B."/>
            <person name="Dossat C."/>
            <person name="Land M.L."/>
            <person name="Broussolle V."/>
            <person name="Brillard J."/>
            <person name="Guinebretiere M.-H."/>
            <person name="Sanchis V."/>
            <person name="Nguen-the C."/>
            <person name="Lereclus D."/>
            <person name="Richardson P."/>
            <person name="Wincker P."/>
            <person name="Weissenbach J."/>
            <person name="Ehrlich S.D."/>
            <person name="Sorokin A."/>
        </authorList>
    </citation>
    <scope>NUCLEOTIDE SEQUENCE [LARGE SCALE GENOMIC DNA]</scope>
    <source>
        <strain>DSM 22905 / CIP 110041 / 391-98 / NVH 391-98</strain>
    </source>
</reference>
<proteinExistence type="inferred from homology"/>
<dbReference type="EC" id="2.7.7.6" evidence="1"/>
<dbReference type="EMBL" id="CP000764">
    <property type="protein sequence ID" value="ABS20505.1"/>
    <property type="molecule type" value="Genomic_DNA"/>
</dbReference>
<dbReference type="RefSeq" id="WP_011983267.1">
    <property type="nucleotide sequence ID" value="NC_009674.1"/>
</dbReference>
<dbReference type="SMR" id="A7GK47"/>
<dbReference type="STRING" id="315749.Bcer98_0131"/>
<dbReference type="GeneID" id="33895452"/>
<dbReference type="KEGG" id="bcy:Bcer98_0131"/>
<dbReference type="eggNOG" id="COG0202">
    <property type="taxonomic scope" value="Bacteria"/>
</dbReference>
<dbReference type="HOGENOM" id="CLU_053084_0_1_9"/>
<dbReference type="OrthoDB" id="9805706at2"/>
<dbReference type="Proteomes" id="UP000002300">
    <property type="component" value="Chromosome"/>
</dbReference>
<dbReference type="GO" id="GO:0005737">
    <property type="term" value="C:cytoplasm"/>
    <property type="evidence" value="ECO:0007669"/>
    <property type="project" value="UniProtKB-ARBA"/>
</dbReference>
<dbReference type="GO" id="GO:0000428">
    <property type="term" value="C:DNA-directed RNA polymerase complex"/>
    <property type="evidence" value="ECO:0007669"/>
    <property type="project" value="UniProtKB-KW"/>
</dbReference>
<dbReference type="GO" id="GO:0003677">
    <property type="term" value="F:DNA binding"/>
    <property type="evidence" value="ECO:0007669"/>
    <property type="project" value="UniProtKB-UniRule"/>
</dbReference>
<dbReference type="GO" id="GO:0003899">
    <property type="term" value="F:DNA-directed RNA polymerase activity"/>
    <property type="evidence" value="ECO:0007669"/>
    <property type="project" value="UniProtKB-UniRule"/>
</dbReference>
<dbReference type="GO" id="GO:0046983">
    <property type="term" value="F:protein dimerization activity"/>
    <property type="evidence" value="ECO:0007669"/>
    <property type="project" value="InterPro"/>
</dbReference>
<dbReference type="GO" id="GO:0006351">
    <property type="term" value="P:DNA-templated transcription"/>
    <property type="evidence" value="ECO:0007669"/>
    <property type="project" value="UniProtKB-UniRule"/>
</dbReference>
<dbReference type="CDD" id="cd06928">
    <property type="entry name" value="RNAP_alpha_NTD"/>
    <property type="match status" value="1"/>
</dbReference>
<dbReference type="FunFam" id="1.10.150.20:FF:000001">
    <property type="entry name" value="DNA-directed RNA polymerase subunit alpha"/>
    <property type="match status" value="1"/>
</dbReference>
<dbReference type="FunFam" id="2.170.120.12:FF:000001">
    <property type="entry name" value="DNA-directed RNA polymerase subunit alpha"/>
    <property type="match status" value="1"/>
</dbReference>
<dbReference type="Gene3D" id="1.10.150.20">
    <property type="entry name" value="5' to 3' exonuclease, C-terminal subdomain"/>
    <property type="match status" value="1"/>
</dbReference>
<dbReference type="Gene3D" id="2.170.120.12">
    <property type="entry name" value="DNA-directed RNA polymerase, insert domain"/>
    <property type="match status" value="1"/>
</dbReference>
<dbReference type="Gene3D" id="3.30.1360.10">
    <property type="entry name" value="RNA polymerase, RBP11-like subunit"/>
    <property type="match status" value="1"/>
</dbReference>
<dbReference type="HAMAP" id="MF_00059">
    <property type="entry name" value="RNApol_bact_RpoA"/>
    <property type="match status" value="1"/>
</dbReference>
<dbReference type="InterPro" id="IPR011262">
    <property type="entry name" value="DNA-dir_RNA_pol_insert"/>
</dbReference>
<dbReference type="InterPro" id="IPR011263">
    <property type="entry name" value="DNA-dir_RNA_pol_RpoA/D/Rpb3"/>
</dbReference>
<dbReference type="InterPro" id="IPR011773">
    <property type="entry name" value="DNA-dir_RpoA"/>
</dbReference>
<dbReference type="InterPro" id="IPR036603">
    <property type="entry name" value="RBP11-like"/>
</dbReference>
<dbReference type="InterPro" id="IPR011260">
    <property type="entry name" value="RNAP_asu_C"/>
</dbReference>
<dbReference type="InterPro" id="IPR036643">
    <property type="entry name" value="RNApol_insert_sf"/>
</dbReference>
<dbReference type="NCBIfam" id="NF003513">
    <property type="entry name" value="PRK05182.1-2"/>
    <property type="match status" value="1"/>
</dbReference>
<dbReference type="NCBIfam" id="NF003515">
    <property type="entry name" value="PRK05182.2-1"/>
    <property type="match status" value="1"/>
</dbReference>
<dbReference type="NCBIfam" id="NF003516">
    <property type="entry name" value="PRK05182.2-2"/>
    <property type="match status" value="1"/>
</dbReference>
<dbReference type="NCBIfam" id="NF003519">
    <property type="entry name" value="PRK05182.2-5"/>
    <property type="match status" value="1"/>
</dbReference>
<dbReference type="NCBIfam" id="TIGR02027">
    <property type="entry name" value="rpoA"/>
    <property type="match status" value="1"/>
</dbReference>
<dbReference type="Pfam" id="PF01000">
    <property type="entry name" value="RNA_pol_A_bac"/>
    <property type="match status" value="1"/>
</dbReference>
<dbReference type="Pfam" id="PF03118">
    <property type="entry name" value="RNA_pol_A_CTD"/>
    <property type="match status" value="1"/>
</dbReference>
<dbReference type="Pfam" id="PF01193">
    <property type="entry name" value="RNA_pol_L"/>
    <property type="match status" value="1"/>
</dbReference>
<dbReference type="SMART" id="SM00662">
    <property type="entry name" value="RPOLD"/>
    <property type="match status" value="1"/>
</dbReference>
<dbReference type="SUPFAM" id="SSF47789">
    <property type="entry name" value="C-terminal domain of RNA polymerase alpha subunit"/>
    <property type="match status" value="1"/>
</dbReference>
<dbReference type="SUPFAM" id="SSF56553">
    <property type="entry name" value="Insert subdomain of RNA polymerase alpha subunit"/>
    <property type="match status" value="1"/>
</dbReference>
<dbReference type="SUPFAM" id="SSF55257">
    <property type="entry name" value="RBP11-like subunits of RNA polymerase"/>
    <property type="match status" value="1"/>
</dbReference>
<keyword id="KW-0240">DNA-directed RNA polymerase</keyword>
<keyword id="KW-0548">Nucleotidyltransferase</keyword>
<keyword id="KW-0804">Transcription</keyword>
<keyword id="KW-0808">Transferase</keyword>
<feature type="chain" id="PRO_0000323619" description="DNA-directed RNA polymerase subunit alpha">
    <location>
        <begin position="1"/>
        <end position="314"/>
    </location>
</feature>
<feature type="region of interest" description="Alpha N-terminal domain (alpha-NTD)" evidence="1">
    <location>
        <begin position="1"/>
        <end position="228"/>
    </location>
</feature>
<feature type="region of interest" description="Alpha C-terminal domain (alpha-CTD)" evidence="1">
    <location>
        <begin position="246"/>
        <end position="314"/>
    </location>
</feature>
<evidence type="ECO:0000255" key="1">
    <source>
        <dbReference type="HAMAP-Rule" id="MF_00059"/>
    </source>
</evidence>
<protein>
    <recommendedName>
        <fullName evidence="1">DNA-directed RNA polymerase subunit alpha</fullName>
        <shortName evidence="1">RNAP subunit alpha</shortName>
        <ecNumber evidence="1">2.7.7.6</ecNumber>
    </recommendedName>
    <alternativeName>
        <fullName evidence="1">RNA polymerase subunit alpha</fullName>
    </alternativeName>
    <alternativeName>
        <fullName evidence="1">Transcriptase subunit alpha</fullName>
    </alternativeName>
</protein>
<comment type="function">
    <text evidence="1">DNA-dependent RNA polymerase catalyzes the transcription of DNA into RNA using the four ribonucleoside triphosphates as substrates.</text>
</comment>
<comment type="catalytic activity">
    <reaction evidence="1">
        <text>RNA(n) + a ribonucleoside 5'-triphosphate = RNA(n+1) + diphosphate</text>
        <dbReference type="Rhea" id="RHEA:21248"/>
        <dbReference type="Rhea" id="RHEA-COMP:14527"/>
        <dbReference type="Rhea" id="RHEA-COMP:17342"/>
        <dbReference type="ChEBI" id="CHEBI:33019"/>
        <dbReference type="ChEBI" id="CHEBI:61557"/>
        <dbReference type="ChEBI" id="CHEBI:140395"/>
        <dbReference type="EC" id="2.7.7.6"/>
    </reaction>
</comment>
<comment type="subunit">
    <text evidence="1">Homodimer. The RNAP catalytic core consists of 2 alpha, 1 beta, 1 beta' and 1 omega subunit. When a sigma factor is associated with the core the holoenzyme is formed, which can initiate transcription.</text>
</comment>
<comment type="domain">
    <text evidence="1">The N-terminal domain is essential for RNAP assembly and basal transcription, whereas the C-terminal domain is involved in interaction with transcriptional regulators and with upstream promoter elements.</text>
</comment>
<comment type="similarity">
    <text evidence="1">Belongs to the RNA polymerase alpha chain family.</text>
</comment>
<name>RPOA_BACCN</name>
<gene>
    <name evidence="1" type="primary">rpoA</name>
    <name type="ordered locus">Bcer98_0131</name>
</gene>